<accession>B4TJT3</accession>
<comment type="function">
    <text evidence="1">Catalyzes the reversible oxidation of malate to oxaloacetate.</text>
</comment>
<comment type="catalytic activity">
    <reaction evidence="1">
        <text>(S)-malate + NAD(+) = oxaloacetate + NADH + H(+)</text>
        <dbReference type="Rhea" id="RHEA:21432"/>
        <dbReference type="ChEBI" id="CHEBI:15378"/>
        <dbReference type="ChEBI" id="CHEBI:15589"/>
        <dbReference type="ChEBI" id="CHEBI:16452"/>
        <dbReference type="ChEBI" id="CHEBI:57540"/>
        <dbReference type="ChEBI" id="CHEBI:57945"/>
        <dbReference type="EC" id="1.1.1.37"/>
    </reaction>
</comment>
<comment type="subunit">
    <text evidence="1">Homodimer.</text>
</comment>
<comment type="similarity">
    <text evidence="1">Belongs to the LDH/MDH superfamily. MDH type 1 family.</text>
</comment>
<organism>
    <name type="scientific">Salmonella heidelberg (strain SL476)</name>
    <dbReference type="NCBI Taxonomy" id="454169"/>
    <lineage>
        <taxon>Bacteria</taxon>
        <taxon>Pseudomonadati</taxon>
        <taxon>Pseudomonadota</taxon>
        <taxon>Gammaproteobacteria</taxon>
        <taxon>Enterobacterales</taxon>
        <taxon>Enterobacteriaceae</taxon>
        <taxon>Salmonella</taxon>
    </lineage>
</organism>
<sequence length="312" mass="32476">MKVAVLGAAGGIGQALALLLKNQLPSGSELSLYDIAPVTPGVAVDLSHIPTAVKIKGFSGEDATPALEGADVVLISAGVARKPGMDRSDLFNVNAGIVKNLVQQIAKTCPKACVGIITNPVNTTVAIAAEVLKKAGVYDKNKLFGVTTLDIIRSNTFVAELKGKLPTEVEVPVIGGHSGVTILPLLSQIPGVSFTEQEAAELTKRIQNAGTEVVEAKAGGGSATLSMGQAAARFGLSLVRALQGEKGVVECAYVEGDGQYARFFSQPLLLGKNGVEERKSIGTLSAFEQHSLDAMLDTLKKDIQLGEDFINK</sequence>
<proteinExistence type="inferred from homology"/>
<gene>
    <name evidence="1" type="primary">mdh</name>
    <name type="ordered locus">SeHA_C3657</name>
</gene>
<dbReference type="EC" id="1.1.1.37" evidence="1"/>
<dbReference type="EMBL" id="CP001120">
    <property type="protein sequence ID" value="ACF66010.1"/>
    <property type="molecule type" value="Genomic_DNA"/>
</dbReference>
<dbReference type="RefSeq" id="WP_000861586.1">
    <property type="nucleotide sequence ID" value="NC_011083.1"/>
</dbReference>
<dbReference type="SMR" id="B4TJT3"/>
<dbReference type="KEGG" id="seh:SeHA_C3657"/>
<dbReference type="HOGENOM" id="CLU_047181_1_0_6"/>
<dbReference type="Proteomes" id="UP000001866">
    <property type="component" value="Chromosome"/>
</dbReference>
<dbReference type="GO" id="GO:0005737">
    <property type="term" value="C:cytoplasm"/>
    <property type="evidence" value="ECO:0007669"/>
    <property type="project" value="TreeGrafter"/>
</dbReference>
<dbReference type="GO" id="GO:0030060">
    <property type="term" value="F:L-malate dehydrogenase (NAD+) activity"/>
    <property type="evidence" value="ECO:0007669"/>
    <property type="project" value="UniProtKB-UniRule"/>
</dbReference>
<dbReference type="GO" id="GO:0006108">
    <property type="term" value="P:malate metabolic process"/>
    <property type="evidence" value="ECO:0007669"/>
    <property type="project" value="InterPro"/>
</dbReference>
<dbReference type="GO" id="GO:0006099">
    <property type="term" value="P:tricarboxylic acid cycle"/>
    <property type="evidence" value="ECO:0007669"/>
    <property type="project" value="UniProtKB-UniRule"/>
</dbReference>
<dbReference type="CDD" id="cd01337">
    <property type="entry name" value="MDH_glyoxysomal_mitochondrial"/>
    <property type="match status" value="1"/>
</dbReference>
<dbReference type="FunFam" id="3.40.50.720:FF:000017">
    <property type="entry name" value="Malate dehydrogenase"/>
    <property type="match status" value="1"/>
</dbReference>
<dbReference type="FunFam" id="3.90.110.10:FF:000001">
    <property type="entry name" value="Malate dehydrogenase"/>
    <property type="match status" value="1"/>
</dbReference>
<dbReference type="Gene3D" id="3.90.110.10">
    <property type="entry name" value="Lactate dehydrogenase/glycoside hydrolase, family 4, C-terminal"/>
    <property type="match status" value="1"/>
</dbReference>
<dbReference type="Gene3D" id="3.40.50.720">
    <property type="entry name" value="NAD(P)-binding Rossmann-like Domain"/>
    <property type="match status" value="1"/>
</dbReference>
<dbReference type="HAMAP" id="MF_01516">
    <property type="entry name" value="Malate_dehydrog_1"/>
    <property type="match status" value="1"/>
</dbReference>
<dbReference type="InterPro" id="IPR001557">
    <property type="entry name" value="L-lactate/malate_DH"/>
</dbReference>
<dbReference type="InterPro" id="IPR022383">
    <property type="entry name" value="Lactate/malate_DH_C"/>
</dbReference>
<dbReference type="InterPro" id="IPR001236">
    <property type="entry name" value="Lactate/malate_DH_N"/>
</dbReference>
<dbReference type="InterPro" id="IPR015955">
    <property type="entry name" value="Lactate_DH/Glyco_Ohase_4_C"/>
</dbReference>
<dbReference type="InterPro" id="IPR001252">
    <property type="entry name" value="Malate_DH_AS"/>
</dbReference>
<dbReference type="InterPro" id="IPR010097">
    <property type="entry name" value="Malate_DH_type1"/>
</dbReference>
<dbReference type="InterPro" id="IPR023958">
    <property type="entry name" value="Malate_DH_type1_bac"/>
</dbReference>
<dbReference type="InterPro" id="IPR036291">
    <property type="entry name" value="NAD(P)-bd_dom_sf"/>
</dbReference>
<dbReference type="NCBIfam" id="TIGR01772">
    <property type="entry name" value="MDH_euk_gproteo"/>
    <property type="match status" value="1"/>
</dbReference>
<dbReference type="PANTHER" id="PTHR11540">
    <property type="entry name" value="MALATE AND LACTATE DEHYDROGENASE"/>
    <property type="match status" value="1"/>
</dbReference>
<dbReference type="PANTHER" id="PTHR11540:SF16">
    <property type="entry name" value="MALATE DEHYDROGENASE, MITOCHONDRIAL"/>
    <property type="match status" value="1"/>
</dbReference>
<dbReference type="Pfam" id="PF02866">
    <property type="entry name" value="Ldh_1_C"/>
    <property type="match status" value="1"/>
</dbReference>
<dbReference type="Pfam" id="PF00056">
    <property type="entry name" value="Ldh_1_N"/>
    <property type="match status" value="1"/>
</dbReference>
<dbReference type="PIRSF" id="PIRSF000102">
    <property type="entry name" value="Lac_mal_DH"/>
    <property type="match status" value="1"/>
</dbReference>
<dbReference type="SUPFAM" id="SSF56327">
    <property type="entry name" value="LDH C-terminal domain-like"/>
    <property type="match status" value="1"/>
</dbReference>
<dbReference type="SUPFAM" id="SSF51735">
    <property type="entry name" value="NAD(P)-binding Rossmann-fold domains"/>
    <property type="match status" value="1"/>
</dbReference>
<dbReference type="PROSITE" id="PS00068">
    <property type="entry name" value="MDH"/>
    <property type="match status" value="1"/>
</dbReference>
<protein>
    <recommendedName>
        <fullName evidence="1">Malate dehydrogenase</fullName>
        <ecNumber evidence="1">1.1.1.37</ecNumber>
    </recommendedName>
</protein>
<feature type="chain" id="PRO_1000191593" description="Malate dehydrogenase">
    <location>
        <begin position="1"/>
        <end position="312"/>
    </location>
</feature>
<feature type="active site" description="Proton acceptor" evidence="1">
    <location>
        <position position="177"/>
    </location>
</feature>
<feature type="binding site" evidence="1">
    <location>
        <begin position="7"/>
        <end position="13"/>
    </location>
    <ligand>
        <name>NAD(+)</name>
        <dbReference type="ChEBI" id="CHEBI:57540"/>
    </ligand>
</feature>
<feature type="binding site" evidence="1">
    <location>
        <position position="34"/>
    </location>
    <ligand>
        <name>NAD(+)</name>
        <dbReference type="ChEBI" id="CHEBI:57540"/>
    </ligand>
</feature>
<feature type="binding site" evidence="1">
    <location>
        <position position="81"/>
    </location>
    <ligand>
        <name>substrate</name>
    </ligand>
</feature>
<feature type="binding site" evidence="1">
    <location>
        <position position="87"/>
    </location>
    <ligand>
        <name>substrate</name>
    </ligand>
</feature>
<feature type="binding site" evidence="1">
    <location>
        <position position="94"/>
    </location>
    <ligand>
        <name>NAD(+)</name>
        <dbReference type="ChEBI" id="CHEBI:57540"/>
    </ligand>
</feature>
<feature type="binding site" evidence="1">
    <location>
        <begin position="117"/>
        <end position="119"/>
    </location>
    <ligand>
        <name>NAD(+)</name>
        <dbReference type="ChEBI" id="CHEBI:57540"/>
    </ligand>
</feature>
<feature type="binding site" evidence="1">
    <location>
        <position position="119"/>
    </location>
    <ligand>
        <name>substrate</name>
    </ligand>
</feature>
<feature type="binding site" evidence="1">
    <location>
        <position position="153"/>
    </location>
    <ligand>
        <name>substrate</name>
    </ligand>
</feature>
<feature type="binding site" evidence="1">
    <location>
        <position position="227"/>
    </location>
    <ligand>
        <name>NAD(+)</name>
        <dbReference type="ChEBI" id="CHEBI:57540"/>
    </ligand>
</feature>
<reference key="1">
    <citation type="journal article" date="2011" name="J. Bacteriol.">
        <title>Comparative genomics of 28 Salmonella enterica isolates: evidence for CRISPR-mediated adaptive sublineage evolution.</title>
        <authorList>
            <person name="Fricke W.F."/>
            <person name="Mammel M.K."/>
            <person name="McDermott P.F."/>
            <person name="Tartera C."/>
            <person name="White D.G."/>
            <person name="Leclerc J.E."/>
            <person name="Ravel J."/>
            <person name="Cebula T.A."/>
        </authorList>
    </citation>
    <scope>NUCLEOTIDE SEQUENCE [LARGE SCALE GENOMIC DNA]</scope>
    <source>
        <strain>SL476</strain>
    </source>
</reference>
<keyword id="KW-0520">NAD</keyword>
<keyword id="KW-0560">Oxidoreductase</keyword>
<keyword id="KW-0816">Tricarboxylic acid cycle</keyword>
<evidence type="ECO:0000255" key="1">
    <source>
        <dbReference type="HAMAP-Rule" id="MF_01516"/>
    </source>
</evidence>
<name>MDH_SALHS</name>